<sequence>MNAVEIYTDGACKGNPGPGGWGAFLKSADSQKELFGGELGTTNNRMEMTAVIEALAALKRPCQVTLHVDSQYVLKGMTEWLAGWKARGWKTAAKQPVKNVDLWQRLDELVSTSGHRIDWRWVRGHNGDPGNEHADMLANRGVELALRQR</sequence>
<reference key="1">
    <citation type="submission" date="2006-02" db="EMBL/GenBank/DDBJ databases">
        <title>Complete sequence of chromosome of Rhodoferax ferrireducens DSM 15236.</title>
        <authorList>
            <person name="Copeland A."/>
            <person name="Lucas S."/>
            <person name="Lapidus A."/>
            <person name="Barry K."/>
            <person name="Detter J.C."/>
            <person name="Glavina del Rio T."/>
            <person name="Hammon N."/>
            <person name="Israni S."/>
            <person name="Pitluck S."/>
            <person name="Brettin T."/>
            <person name="Bruce D."/>
            <person name="Han C."/>
            <person name="Tapia R."/>
            <person name="Gilna P."/>
            <person name="Kiss H."/>
            <person name="Schmutz J."/>
            <person name="Larimer F."/>
            <person name="Land M."/>
            <person name="Kyrpides N."/>
            <person name="Ivanova N."/>
            <person name="Richardson P."/>
        </authorList>
    </citation>
    <scope>NUCLEOTIDE SEQUENCE [LARGE SCALE GENOMIC DNA]</scope>
    <source>
        <strain>ATCC BAA-621 / DSM 15236 / T118</strain>
    </source>
</reference>
<evidence type="ECO:0000255" key="1">
    <source>
        <dbReference type="HAMAP-Rule" id="MF_00042"/>
    </source>
</evidence>
<evidence type="ECO:0000255" key="2">
    <source>
        <dbReference type="PROSITE-ProRule" id="PRU00408"/>
    </source>
</evidence>
<proteinExistence type="inferred from homology"/>
<comment type="function">
    <text evidence="1">Endonuclease that specifically degrades the RNA of RNA-DNA hybrids.</text>
</comment>
<comment type="catalytic activity">
    <reaction evidence="1">
        <text>Endonucleolytic cleavage to 5'-phosphomonoester.</text>
        <dbReference type="EC" id="3.1.26.4"/>
    </reaction>
</comment>
<comment type="cofactor">
    <cofactor evidence="1">
        <name>Mg(2+)</name>
        <dbReference type="ChEBI" id="CHEBI:18420"/>
    </cofactor>
    <text evidence="1">Binds 1 Mg(2+) ion per subunit. May bind a second metal ion at a regulatory site, or after substrate binding.</text>
</comment>
<comment type="subunit">
    <text evidence="1">Monomer.</text>
</comment>
<comment type="subcellular location">
    <subcellularLocation>
        <location evidence="1">Cytoplasm</location>
    </subcellularLocation>
</comment>
<comment type="similarity">
    <text evidence="1">Belongs to the RNase H family.</text>
</comment>
<accession>Q21YF6</accession>
<gene>
    <name evidence="1" type="primary">rnhA</name>
    <name type="ordered locus">Rfer_1464</name>
</gene>
<keyword id="KW-0963">Cytoplasm</keyword>
<keyword id="KW-0255">Endonuclease</keyword>
<keyword id="KW-0378">Hydrolase</keyword>
<keyword id="KW-0460">Magnesium</keyword>
<keyword id="KW-0479">Metal-binding</keyword>
<keyword id="KW-0540">Nuclease</keyword>
<keyword id="KW-1185">Reference proteome</keyword>
<name>RNH_ALBFT</name>
<feature type="chain" id="PRO_0000332665" description="Ribonuclease H">
    <location>
        <begin position="1"/>
        <end position="149"/>
    </location>
</feature>
<feature type="domain" description="RNase H type-1" evidence="2">
    <location>
        <begin position="1"/>
        <end position="143"/>
    </location>
</feature>
<feature type="binding site" evidence="1">
    <location>
        <position position="9"/>
    </location>
    <ligand>
        <name>Mg(2+)</name>
        <dbReference type="ChEBI" id="CHEBI:18420"/>
        <label>1</label>
    </ligand>
</feature>
<feature type="binding site" evidence="1">
    <location>
        <position position="9"/>
    </location>
    <ligand>
        <name>Mg(2+)</name>
        <dbReference type="ChEBI" id="CHEBI:18420"/>
        <label>2</label>
    </ligand>
</feature>
<feature type="binding site" evidence="1">
    <location>
        <position position="47"/>
    </location>
    <ligand>
        <name>Mg(2+)</name>
        <dbReference type="ChEBI" id="CHEBI:18420"/>
        <label>1</label>
    </ligand>
</feature>
<feature type="binding site" evidence="1">
    <location>
        <position position="69"/>
    </location>
    <ligand>
        <name>Mg(2+)</name>
        <dbReference type="ChEBI" id="CHEBI:18420"/>
        <label>1</label>
    </ligand>
</feature>
<feature type="binding site" evidence="1">
    <location>
        <position position="135"/>
    </location>
    <ligand>
        <name>Mg(2+)</name>
        <dbReference type="ChEBI" id="CHEBI:18420"/>
        <label>2</label>
    </ligand>
</feature>
<dbReference type="EC" id="3.1.26.4" evidence="1"/>
<dbReference type="EMBL" id="CP000267">
    <property type="protein sequence ID" value="ABD69197.1"/>
    <property type="molecule type" value="Genomic_DNA"/>
</dbReference>
<dbReference type="RefSeq" id="WP_011463765.1">
    <property type="nucleotide sequence ID" value="NC_007908.1"/>
</dbReference>
<dbReference type="SMR" id="Q21YF6"/>
<dbReference type="STRING" id="338969.Rfer_1464"/>
<dbReference type="KEGG" id="rfr:Rfer_1464"/>
<dbReference type="eggNOG" id="COG0328">
    <property type="taxonomic scope" value="Bacteria"/>
</dbReference>
<dbReference type="HOGENOM" id="CLU_030894_6_0_4"/>
<dbReference type="OrthoDB" id="7845843at2"/>
<dbReference type="Proteomes" id="UP000008332">
    <property type="component" value="Chromosome"/>
</dbReference>
<dbReference type="GO" id="GO:0005737">
    <property type="term" value="C:cytoplasm"/>
    <property type="evidence" value="ECO:0007669"/>
    <property type="project" value="UniProtKB-SubCell"/>
</dbReference>
<dbReference type="GO" id="GO:0000287">
    <property type="term" value="F:magnesium ion binding"/>
    <property type="evidence" value="ECO:0007669"/>
    <property type="project" value="UniProtKB-UniRule"/>
</dbReference>
<dbReference type="GO" id="GO:0003676">
    <property type="term" value="F:nucleic acid binding"/>
    <property type="evidence" value="ECO:0007669"/>
    <property type="project" value="InterPro"/>
</dbReference>
<dbReference type="GO" id="GO:0004523">
    <property type="term" value="F:RNA-DNA hybrid ribonuclease activity"/>
    <property type="evidence" value="ECO:0007669"/>
    <property type="project" value="UniProtKB-UniRule"/>
</dbReference>
<dbReference type="GO" id="GO:0043137">
    <property type="term" value="P:DNA replication, removal of RNA primer"/>
    <property type="evidence" value="ECO:0007669"/>
    <property type="project" value="TreeGrafter"/>
</dbReference>
<dbReference type="CDD" id="cd09278">
    <property type="entry name" value="RNase_HI_prokaryote_like"/>
    <property type="match status" value="1"/>
</dbReference>
<dbReference type="FunFam" id="3.30.420.10:FF:000089">
    <property type="entry name" value="Ribonuclease H"/>
    <property type="match status" value="1"/>
</dbReference>
<dbReference type="Gene3D" id="3.30.420.10">
    <property type="entry name" value="Ribonuclease H-like superfamily/Ribonuclease H"/>
    <property type="match status" value="1"/>
</dbReference>
<dbReference type="HAMAP" id="MF_00042">
    <property type="entry name" value="RNase_H"/>
    <property type="match status" value="1"/>
</dbReference>
<dbReference type="InterPro" id="IPR050092">
    <property type="entry name" value="RNase_H"/>
</dbReference>
<dbReference type="InterPro" id="IPR012337">
    <property type="entry name" value="RNaseH-like_sf"/>
</dbReference>
<dbReference type="InterPro" id="IPR002156">
    <property type="entry name" value="RNaseH_domain"/>
</dbReference>
<dbReference type="InterPro" id="IPR036397">
    <property type="entry name" value="RNaseH_sf"/>
</dbReference>
<dbReference type="InterPro" id="IPR022892">
    <property type="entry name" value="RNaseHI"/>
</dbReference>
<dbReference type="NCBIfam" id="NF001236">
    <property type="entry name" value="PRK00203.1"/>
    <property type="match status" value="1"/>
</dbReference>
<dbReference type="PANTHER" id="PTHR10642">
    <property type="entry name" value="RIBONUCLEASE H1"/>
    <property type="match status" value="1"/>
</dbReference>
<dbReference type="PANTHER" id="PTHR10642:SF26">
    <property type="entry name" value="RIBONUCLEASE H1"/>
    <property type="match status" value="1"/>
</dbReference>
<dbReference type="Pfam" id="PF00075">
    <property type="entry name" value="RNase_H"/>
    <property type="match status" value="1"/>
</dbReference>
<dbReference type="SUPFAM" id="SSF53098">
    <property type="entry name" value="Ribonuclease H-like"/>
    <property type="match status" value="1"/>
</dbReference>
<dbReference type="PROSITE" id="PS50879">
    <property type="entry name" value="RNASE_H_1"/>
    <property type="match status" value="1"/>
</dbReference>
<protein>
    <recommendedName>
        <fullName evidence="1">Ribonuclease H</fullName>
        <shortName evidence="1">RNase H</shortName>
        <ecNumber evidence="1">3.1.26.4</ecNumber>
    </recommendedName>
</protein>
<organism>
    <name type="scientific">Albidiferax ferrireducens (strain ATCC BAA-621 / DSM 15236 / T118)</name>
    <name type="common">Rhodoferax ferrireducens</name>
    <dbReference type="NCBI Taxonomy" id="338969"/>
    <lineage>
        <taxon>Bacteria</taxon>
        <taxon>Pseudomonadati</taxon>
        <taxon>Pseudomonadota</taxon>
        <taxon>Betaproteobacteria</taxon>
        <taxon>Burkholderiales</taxon>
        <taxon>Comamonadaceae</taxon>
        <taxon>Rhodoferax</taxon>
    </lineage>
</organism>